<name>GCSP_SALDC</name>
<reference key="1">
    <citation type="journal article" date="2011" name="J. Bacteriol.">
        <title>Comparative genomics of 28 Salmonella enterica isolates: evidence for CRISPR-mediated adaptive sublineage evolution.</title>
        <authorList>
            <person name="Fricke W.F."/>
            <person name="Mammel M.K."/>
            <person name="McDermott P.F."/>
            <person name="Tartera C."/>
            <person name="White D.G."/>
            <person name="Leclerc J.E."/>
            <person name="Ravel J."/>
            <person name="Cebula T.A."/>
        </authorList>
    </citation>
    <scope>NUCLEOTIDE SEQUENCE [LARGE SCALE GENOMIC DNA]</scope>
    <source>
        <strain>CT_02021853</strain>
    </source>
</reference>
<feature type="chain" id="PRO_1000132451" description="Glycine dehydrogenase (decarboxylating)">
    <location>
        <begin position="1"/>
        <end position="957"/>
    </location>
</feature>
<feature type="modified residue" description="N6-(pyridoxal phosphate)lysine" evidence="1">
    <location>
        <position position="708"/>
    </location>
</feature>
<proteinExistence type="inferred from homology"/>
<organism>
    <name type="scientific">Salmonella dublin (strain CT_02021853)</name>
    <dbReference type="NCBI Taxonomy" id="439851"/>
    <lineage>
        <taxon>Bacteria</taxon>
        <taxon>Pseudomonadati</taxon>
        <taxon>Pseudomonadota</taxon>
        <taxon>Gammaproteobacteria</taxon>
        <taxon>Enterobacterales</taxon>
        <taxon>Enterobacteriaceae</taxon>
        <taxon>Salmonella</taxon>
    </lineage>
</organism>
<evidence type="ECO:0000255" key="1">
    <source>
        <dbReference type="HAMAP-Rule" id="MF_00711"/>
    </source>
</evidence>
<keyword id="KW-0560">Oxidoreductase</keyword>
<keyword id="KW-0663">Pyridoxal phosphate</keyword>
<comment type="function">
    <text evidence="1">The glycine cleavage system catalyzes the degradation of glycine. The P protein binds the alpha-amino group of glycine through its pyridoxal phosphate cofactor; CO(2) is released and the remaining methylamine moiety is then transferred to the lipoamide cofactor of the H protein.</text>
</comment>
<comment type="catalytic activity">
    <reaction evidence="1">
        <text>N(6)-[(R)-lipoyl]-L-lysyl-[glycine-cleavage complex H protein] + glycine + H(+) = N(6)-[(R)-S(8)-aminomethyldihydrolipoyl]-L-lysyl-[glycine-cleavage complex H protein] + CO2</text>
        <dbReference type="Rhea" id="RHEA:24304"/>
        <dbReference type="Rhea" id="RHEA-COMP:10494"/>
        <dbReference type="Rhea" id="RHEA-COMP:10495"/>
        <dbReference type="ChEBI" id="CHEBI:15378"/>
        <dbReference type="ChEBI" id="CHEBI:16526"/>
        <dbReference type="ChEBI" id="CHEBI:57305"/>
        <dbReference type="ChEBI" id="CHEBI:83099"/>
        <dbReference type="ChEBI" id="CHEBI:83143"/>
        <dbReference type="EC" id="1.4.4.2"/>
    </reaction>
</comment>
<comment type="cofactor">
    <cofactor evidence="1">
        <name>pyridoxal 5'-phosphate</name>
        <dbReference type="ChEBI" id="CHEBI:597326"/>
    </cofactor>
</comment>
<comment type="subunit">
    <text evidence="1">The glycine cleavage system is composed of four proteins: P, T, L and H.</text>
</comment>
<comment type="similarity">
    <text evidence="1">Belongs to the GcvP family.</text>
</comment>
<dbReference type="EC" id="1.4.4.2" evidence="1"/>
<dbReference type="EMBL" id="CP001144">
    <property type="protein sequence ID" value="ACH76703.1"/>
    <property type="molecule type" value="Genomic_DNA"/>
</dbReference>
<dbReference type="RefSeq" id="WP_000194966.1">
    <property type="nucleotide sequence ID" value="NC_011205.1"/>
</dbReference>
<dbReference type="SMR" id="B5FUG6"/>
<dbReference type="KEGG" id="sed:SeD_A3390"/>
<dbReference type="HOGENOM" id="CLU_004620_3_2_6"/>
<dbReference type="Proteomes" id="UP000008322">
    <property type="component" value="Chromosome"/>
</dbReference>
<dbReference type="GO" id="GO:0005829">
    <property type="term" value="C:cytosol"/>
    <property type="evidence" value="ECO:0007669"/>
    <property type="project" value="TreeGrafter"/>
</dbReference>
<dbReference type="GO" id="GO:0005960">
    <property type="term" value="C:glycine cleavage complex"/>
    <property type="evidence" value="ECO:0007669"/>
    <property type="project" value="TreeGrafter"/>
</dbReference>
<dbReference type="GO" id="GO:0016594">
    <property type="term" value="F:glycine binding"/>
    <property type="evidence" value="ECO:0007669"/>
    <property type="project" value="TreeGrafter"/>
</dbReference>
<dbReference type="GO" id="GO:0004375">
    <property type="term" value="F:glycine dehydrogenase (decarboxylating) activity"/>
    <property type="evidence" value="ECO:0007669"/>
    <property type="project" value="UniProtKB-EC"/>
</dbReference>
<dbReference type="GO" id="GO:0030170">
    <property type="term" value="F:pyridoxal phosphate binding"/>
    <property type="evidence" value="ECO:0007669"/>
    <property type="project" value="TreeGrafter"/>
</dbReference>
<dbReference type="GO" id="GO:0019464">
    <property type="term" value="P:glycine decarboxylation via glycine cleavage system"/>
    <property type="evidence" value="ECO:0007669"/>
    <property type="project" value="UniProtKB-UniRule"/>
</dbReference>
<dbReference type="CDD" id="cd00613">
    <property type="entry name" value="GDC-P"/>
    <property type="match status" value="2"/>
</dbReference>
<dbReference type="FunFam" id="3.40.640.10:FF:000005">
    <property type="entry name" value="Glycine dehydrogenase (decarboxylating), mitochondrial"/>
    <property type="match status" value="1"/>
</dbReference>
<dbReference type="FunFam" id="3.90.1150.10:FF:000007">
    <property type="entry name" value="Glycine dehydrogenase (decarboxylating), mitochondrial"/>
    <property type="match status" value="1"/>
</dbReference>
<dbReference type="FunFam" id="3.40.640.10:FF:000007">
    <property type="entry name" value="glycine dehydrogenase (Decarboxylating), mitochondrial"/>
    <property type="match status" value="1"/>
</dbReference>
<dbReference type="Gene3D" id="3.90.1150.10">
    <property type="entry name" value="Aspartate Aminotransferase, domain 1"/>
    <property type="match status" value="1"/>
</dbReference>
<dbReference type="Gene3D" id="3.40.640.10">
    <property type="entry name" value="Type I PLP-dependent aspartate aminotransferase-like (Major domain)"/>
    <property type="match status" value="2"/>
</dbReference>
<dbReference type="HAMAP" id="MF_00711">
    <property type="entry name" value="GcvP"/>
    <property type="match status" value="1"/>
</dbReference>
<dbReference type="InterPro" id="IPR003437">
    <property type="entry name" value="GcvP"/>
</dbReference>
<dbReference type="InterPro" id="IPR049316">
    <property type="entry name" value="GDC-P_C"/>
</dbReference>
<dbReference type="InterPro" id="IPR049315">
    <property type="entry name" value="GDC-P_N"/>
</dbReference>
<dbReference type="InterPro" id="IPR020581">
    <property type="entry name" value="GDC_P"/>
</dbReference>
<dbReference type="InterPro" id="IPR015424">
    <property type="entry name" value="PyrdxlP-dep_Trfase"/>
</dbReference>
<dbReference type="InterPro" id="IPR015421">
    <property type="entry name" value="PyrdxlP-dep_Trfase_major"/>
</dbReference>
<dbReference type="InterPro" id="IPR015422">
    <property type="entry name" value="PyrdxlP-dep_Trfase_small"/>
</dbReference>
<dbReference type="NCBIfam" id="TIGR00461">
    <property type="entry name" value="gcvP"/>
    <property type="match status" value="1"/>
</dbReference>
<dbReference type="NCBIfam" id="NF003346">
    <property type="entry name" value="PRK04366.1"/>
    <property type="match status" value="1"/>
</dbReference>
<dbReference type="PANTHER" id="PTHR11773:SF13">
    <property type="entry name" value="GLYCINE DEHYDROGENASE (DECARBOXYLATING)"/>
    <property type="match status" value="1"/>
</dbReference>
<dbReference type="PANTHER" id="PTHR11773">
    <property type="entry name" value="GLYCINE DEHYDROGENASE, DECARBOXYLATING"/>
    <property type="match status" value="1"/>
</dbReference>
<dbReference type="Pfam" id="PF21478">
    <property type="entry name" value="GcvP2_C"/>
    <property type="match status" value="1"/>
</dbReference>
<dbReference type="Pfam" id="PF02347">
    <property type="entry name" value="GDC-P"/>
    <property type="match status" value="2"/>
</dbReference>
<dbReference type="SUPFAM" id="SSF53383">
    <property type="entry name" value="PLP-dependent transferases"/>
    <property type="match status" value="2"/>
</dbReference>
<accession>B5FUG6</accession>
<gene>
    <name evidence="1" type="primary">gcvP</name>
    <name type="ordered locus">SeD_A3390</name>
</gene>
<sequence length="957" mass="104199">MTQTLSQLENRGAFIERHIGPDAAQQQEMLNAVGAESLNALTGQIVPKDIQLATPPQVGEAATEYAALAELKAIAGRNKRFTSYIGMGYTAVQLPPVILRNMLENPGWYTAYTPYQPEVSQGRLEALLNFQQVTLDLTGLDMASASLLDEATAAAEAMAMAKRVSKLKNANRFFVASDVHPQTLDVVRTRAETFGFDVIVDDAAKALDHQDVFGVLLQQVGSTGEIHDYSALISELKARKVIVSVAADFMALVLLTAPGKQGADIVFGSAQRFGVPMGYGGPHAAFFAAKDEFKRSMPGRIIGVSKDAAGNTALRMAMQTREQHIRREKANSNICTSQVLLANIASLYAVYHGPVGLKRIANRIHRLTDILAAGLQQKGLKLRHAHYFDTLCVEVADKAAVLARAEAAEINLRSDIHNAVGITLDETTTRENVAQLFNVLLGGSHGLNIETLDKDVALDSRSIQQSMLRDDAILTHPVFNRYHSETEMMRYMHSLERKDLALNQAMIPLGSCTMKLNAAAEMIPITWPEFAELHPFCPPEQAEGYHQMISQLSDWLVKLTGYDAVCMQPNSGAQGEYAGLLAIRHYHESRNEGHRDICLIPASAHGTNPASAHMAGMQVVVVACDKNGNIDLDDLRAKAEQHAANLSCIMVTYPSTHGVYEETIREVCEVVHQFGGQVYLDGANMNAQVGITSPGFIGADVSHLNLHKTFCIPHGGGGPGMGPIGVKAHLAPFVPGHSVVQIEGMLTRQGAVSAAPFGSASILPISWMYIRMMGAEGLKQASQVAILNANYIASRLKDAYPVLYTGRDGRVAHECILDIRPLKEETGISELDIAKRLIDYGFHAPTMSFPVAGTLMVEPTESEGKAELDRFIDAMLAIRAEIDQVKAGVWPLEDNPLVNAPHIQSELVAEWAHPYSREVAVFPAGVADKYWPTVKRLDDVYGDRNLFCSCVPISDYQ</sequence>
<protein>
    <recommendedName>
        <fullName evidence="1">Glycine dehydrogenase (decarboxylating)</fullName>
        <ecNumber evidence="1">1.4.4.2</ecNumber>
    </recommendedName>
    <alternativeName>
        <fullName evidence="1">Glycine cleavage system P-protein</fullName>
    </alternativeName>
    <alternativeName>
        <fullName evidence="1">Glycine decarboxylase</fullName>
    </alternativeName>
    <alternativeName>
        <fullName evidence="1">Glycine dehydrogenase (aminomethyl-transferring)</fullName>
    </alternativeName>
</protein>